<feature type="chain" id="PRO_0000414355" description="Acireductone dioxygenase 1">
    <location>
        <begin position="1"/>
        <end position="178"/>
    </location>
</feature>
<feature type="binding site" evidence="1">
    <location>
        <position position="84"/>
    </location>
    <ligand>
        <name>Fe(2+)</name>
        <dbReference type="ChEBI" id="CHEBI:29033"/>
        <note>for iron-dependent acireductone dioxygenase activity</note>
    </ligand>
</feature>
<feature type="binding site" evidence="1">
    <location>
        <position position="84"/>
    </location>
    <ligand>
        <name>Ni(2+)</name>
        <dbReference type="ChEBI" id="CHEBI:49786"/>
        <note>for nickel-dependent acireductone dioxygenase activity</note>
    </ligand>
</feature>
<feature type="binding site" evidence="1">
    <location>
        <position position="86"/>
    </location>
    <ligand>
        <name>Fe(2+)</name>
        <dbReference type="ChEBI" id="CHEBI:29033"/>
        <note>for iron-dependent acireductone dioxygenase activity</note>
    </ligand>
</feature>
<feature type="binding site" evidence="1">
    <location>
        <position position="86"/>
    </location>
    <ligand>
        <name>Ni(2+)</name>
        <dbReference type="ChEBI" id="CHEBI:49786"/>
        <note>for nickel-dependent acireductone dioxygenase activity</note>
    </ligand>
</feature>
<feature type="binding site" evidence="1">
    <location>
        <position position="90"/>
    </location>
    <ligand>
        <name>Fe(2+)</name>
        <dbReference type="ChEBI" id="CHEBI:29033"/>
        <note>for iron-dependent acireductone dioxygenase activity</note>
    </ligand>
</feature>
<feature type="binding site" evidence="1">
    <location>
        <position position="90"/>
    </location>
    <ligand>
        <name>Ni(2+)</name>
        <dbReference type="ChEBI" id="CHEBI:49786"/>
        <note>for nickel-dependent acireductone dioxygenase activity</note>
    </ligand>
</feature>
<feature type="binding site" evidence="1">
    <location>
        <position position="130"/>
    </location>
    <ligand>
        <name>Fe(2+)</name>
        <dbReference type="ChEBI" id="CHEBI:29033"/>
        <note>for iron-dependent acireductone dioxygenase activity</note>
    </ligand>
</feature>
<feature type="binding site" evidence="1">
    <location>
        <position position="130"/>
    </location>
    <ligand>
        <name>Ni(2+)</name>
        <dbReference type="ChEBI" id="CHEBI:49786"/>
        <note>for nickel-dependent acireductone dioxygenase activity</note>
    </ligand>
</feature>
<comment type="function">
    <text evidence="1">Catalyzes 2 different reactions between oxygen and the acireductone 1,2-dihydroxy-3-keto-5-methylthiopentene (DHK-MTPene) depending upon the metal bound in the active site. Fe-containing acireductone dioxygenase (Fe-ARD) produces formate and 2-keto-4-methylthiobutyrate (KMTB), the alpha-ketoacid precursor of methionine in the methionine recycle pathway. Ni-containing acireductone dioxygenase (Ni-ARD) produces methylthiopropionate, carbon monoxide and formate, and does not lie on the methionine recycle pathway.</text>
</comment>
<comment type="catalytic activity">
    <reaction evidence="1">
        <text>1,2-dihydroxy-5-(methylsulfanyl)pent-1-en-3-one + O2 = 4-methylsulfanyl-2-oxobutanoate + formate + 2 H(+)</text>
        <dbReference type="Rhea" id="RHEA:24504"/>
        <dbReference type="ChEBI" id="CHEBI:15378"/>
        <dbReference type="ChEBI" id="CHEBI:15379"/>
        <dbReference type="ChEBI" id="CHEBI:15740"/>
        <dbReference type="ChEBI" id="CHEBI:16723"/>
        <dbReference type="ChEBI" id="CHEBI:49252"/>
        <dbReference type="EC" id="1.13.11.54"/>
    </reaction>
</comment>
<comment type="catalytic activity">
    <reaction evidence="1">
        <text>1,2-dihydroxy-5-(methylsulfanyl)pent-1-en-3-one + O2 = 3-(methylsulfanyl)propanoate + CO + formate + 2 H(+)</text>
        <dbReference type="Rhea" id="RHEA:14161"/>
        <dbReference type="ChEBI" id="CHEBI:15378"/>
        <dbReference type="ChEBI" id="CHEBI:15379"/>
        <dbReference type="ChEBI" id="CHEBI:15740"/>
        <dbReference type="ChEBI" id="CHEBI:17245"/>
        <dbReference type="ChEBI" id="CHEBI:49016"/>
        <dbReference type="ChEBI" id="CHEBI:49252"/>
        <dbReference type="EC" id="1.13.11.53"/>
    </reaction>
</comment>
<comment type="cofactor">
    <cofactor evidence="1">
        <name>Fe(2+)</name>
        <dbReference type="ChEBI" id="CHEBI:29033"/>
    </cofactor>
    <cofactor evidence="1">
        <name>Ni(2+)</name>
        <dbReference type="ChEBI" id="CHEBI:49786"/>
    </cofactor>
    <text evidence="1">Binds either 1 Fe or Ni cation per monomer. Iron-binding promotes an acireductone dioxygenase reaction producing 2-keto-4-methylthiobutyrate, while nickel-binding promotes an acireductone dioxygenase reaction producing 3-(methylsulfanyl)propanoate.</text>
</comment>
<comment type="pathway">
    <text evidence="1">Amino-acid biosynthesis; L-methionine biosynthesis via salvage pathway; L-methionine from S-methyl-5-thio-alpha-D-ribose 1-phosphate: step 5/6.</text>
</comment>
<comment type="subcellular location">
    <subcellularLocation>
        <location evidence="1">Cytoplasm</location>
    </subcellularLocation>
    <subcellularLocation>
        <location evidence="1">Nucleus</location>
    </subcellularLocation>
</comment>
<comment type="similarity">
    <text evidence="1">Belongs to the acireductone dioxygenase (ARD) family.</text>
</comment>
<organism>
    <name type="scientific">Coprinopsis cinerea (strain Okayama-7 / 130 / ATCC MYA-4618 / FGSC 9003)</name>
    <name type="common">Inky cap fungus</name>
    <name type="synonym">Hormographiella aspergillata</name>
    <dbReference type="NCBI Taxonomy" id="240176"/>
    <lineage>
        <taxon>Eukaryota</taxon>
        <taxon>Fungi</taxon>
        <taxon>Dikarya</taxon>
        <taxon>Basidiomycota</taxon>
        <taxon>Agaricomycotina</taxon>
        <taxon>Agaricomycetes</taxon>
        <taxon>Agaricomycetidae</taxon>
        <taxon>Agaricales</taxon>
        <taxon>Agaricineae</taxon>
        <taxon>Psathyrellaceae</taxon>
        <taxon>Coprinopsis</taxon>
    </lineage>
</organism>
<dbReference type="EC" id="1.13.11.54" evidence="1"/>
<dbReference type="EC" id="1.13.11.53" evidence="1"/>
<dbReference type="EMBL" id="AACS02000003">
    <property type="protein sequence ID" value="EAU91946.1"/>
    <property type="molecule type" value="Genomic_DNA"/>
</dbReference>
<dbReference type="RefSeq" id="XP_001829862.1">
    <property type="nucleotide sequence ID" value="XM_001829810.1"/>
</dbReference>
<dbReference type="SMR" id="A8N4R7"/>
<dbReference type="FunCoup" id="A8N4R7">
    <property type="interactions" value="78"/>
</dbReference>
<dbReference type="STRING" id="240176.A8N4R7"/>
<dbReference type="GeneID" id="6006299"/>
<dbReference type="KEGG" id="cci:CC1G_11132"/>
<dbReference type="VEuPathDB" id="FungiDB:CC1G_11132"/>
<dbReference type="eggNOG" id="KOG2107">
    <property type="taxonomic scope" value="Eukaryota"/>
</dbReference>
<dbReference type="HOGENOM" id="CLU_090154_1_0_1"/>
<dbReference type="InParanoid" id="A8N4R7"/>
<dbReference type="OMA" id="WYMDESQ"/>
<dbReference type="OrthoDB" id="1867259at2759"/>
<dbReference type="UniPathway" id="UPA00904">
    <property type="reaction ID" value="UER00878"/>
</dbReference>
<dbReference type="Proteomes" id="UP000001861">
    <property type="component" value="Unassembled WGS sequence"/>
</dbReference>
<dbReference type="GO" id="GO:0005737">
    <property type="term" value="C:cytoplasm"/>
    <property type="evidence" value="ECO:0007669"/>
    <property type="project" value="UniProtKB-SubCell"/>
</dbReference>
<dbReference type="GO" id="GO:0005634">
    <property type="term" value="C:nucleus"/>
    <property type="evidence" value="ECO:0007669"/>
    <property type="project" value="UniProtKB-SubCell"/>
</dbReference>
<dbReference type="GO" id="GO:0010308">
    <property type="term" value="F:acireductone dioxygenase (Ni2+-requiring) activity"/>
    <property type="evidence" value="ECO:0007669"/>
    <property type="project" value="UniProtKB-UniRule"/>
</dbReference>
<dbReference type="GO" id="GO:0010309">
    <property type="term" value="F:acireductone dioxygenase [iron(II)-requiring] activity"/>
    <property type="evidence" value="ECO:0007669"/>
    <property type="project" value="UniProtKB-UniRule"/>
</dbReference>
<dbReference type="GO" id="GO:0005506">
    <property type="term" value="F:iron ion binding"/>
    <property type="evidence" value="ECO:0007669"/>
    <property type="project" value="UniProtKB-UniRule"/>
</dbReference>
<dbReference type="GO" id="GO:0016151">
    <property type="term" value="F:nickel cation binding"/>
    <property type="evidence" value="ECO:0007669"/>
    <property type="project" value="UniProtKB-UniRule"/>
</dbReference>
<dbReference type="GO" id="GO:0019509">
    <property type="term" value="P:L-methionine salvage from methylthioadenosine"/>
    <property type="evidence" value="ECO:0007669"/>
    <property type="project" value="UniProtKB-UniRule"/>
</dbReference>
<dbReference type="CDD" id="cd02232">
    <property type="entry name" value="cupin_ARD"/>
    <property type="match status" value="1"/>
</dbReference>
<dbReference type="FunFam" id="2.60.120.10:FF:000079">
    <property type="entry name" value="1,2-dihydroxy-3-keto-5-methylthiopentene dioxygenase"/>
    <property type="match status" value="1"/>
</dbReference>
<dbReference type="Gene3D" id="2.60.120.10">
    <property type="entry name" value="Jelly Rolls"/>
    <property type="match status" value="1"/>
</dbReference>
<dbReference type="HAMAP" id="MF_03154">
    <property type="entry name" value="Salvage_MtnD_euk"/>
    <property type="match status" value="1"/>
</dbReference>
<dbReference type="InterPro" id="IPR004313">
    <property type="entry name" value="ARD"/>
</dbReference>
<dbReference type="InterPro" id="IPR027496">
    <property type="entry name" value="ARD_euk"/>
</dbReference>
<dbReference type="InterPro" id="IPR014710">
    <property type="entry name" value="RmlC-like_jellyroll"/>
</dbReference>
<dbReference type="InterPro" id="IPR011051">
    <property type="entry name" value="RmlC_Cupin_sf"/>
</dbReference>
<dbReference type="PANTHER" id="PTHR23418">
    <property type="entry name" value="ACIREDUCTONE DIOXYGENASE"/>
    <property type="match status" value="1"/>
</dbReference>
<dbReference type="PANTHER" id="PTHR23418:SF0">
    <property type="entry name" value="ACIREDUCTONE DIOXYGENASE"/>
    <property type="match status" value="1"/>
</dbReference>
<dbReference type="Pfam" id="PF03079">
    <property type="entry name" value="ARD"/>
    <property type="match status" value="1"/>
</dbReference>
<dbReference type="SUPFAM" id="SSF51182">
    <property type="entry name" value="RmlC-like cupins"/>
    <property type="match status" value="1"/>
</dbReference>
<evidence type="ECO:0000255" key="1">
    <source>
        <dbReference type="HAMAP-Rule" id="MF_03154"/>
    </source>
</evidence>
<proteinExistence type="inferred from homology"/>
<protein>
    <recommendedName>
        <fullName evidence="1">Acireductone dioxygenase 1</fullName>
    </recommendedName>
    <alternativeName>
        <fullName evidence="1">Acireductone dioxygenase (Fe(2+)-requiring) 1</fullName>
        <shortName evidence="1">ARD' 1</shortName>
        <shortName evidence="1">Fe-ARD 1</shortName>
        <ecNumber evidence="1">1.13.11.54</ecNumber>
    </alternativeName>
    <alternativeName>
        <fullName evidence="1">Acireductone dioxygenase (Ni(2+)-requiring) 1</fullName>
        <shortName evidence="1">ARD 1</shortName>
        <shortName evidence="1">Ni-ARD 1</shortName>
        <ecNumber evidence="1">1.13.11.53</ecNumber>
    </alternativeName>
</protein>
<gene>
    <name evidence="1" type="primary">ADI1-1</name>
    <name type="ORF">CC1G_11132</name>
</gene>
<sequence length="178" mass="20872">MRAYYFDNIPGDQRLPHDSGRPVSEDTLRKLNISYWRIELDGYLPKLNAVAEERGYKNRDFINVSKAGLGDSYEEKLKNFFSEHMHEDEEIRYVVDGSGFFDVRESPSDEWIRIGVEPGDLLVIPAGIYHRFTLDENNYIKAIRLFQDEPKWIPYNRSEETEVNPHRINYLREIGVGA</sequence>
<reference key="1">
    <citation type="journal article" date="2010" name="Proc. Natl. Acad. Sci. U.S.A.">
        <title>Insights into evolution of multicellular fungi from the assembled chromosomes of the mushroom Coprinopsis cinerea (Coprinus cinereus).</title>
        <authorList>
            <person name="Stajich J.E."/>
            <person name="Wilke S.K."/>
            <person name="Ahren D."/>
            <person name="Au C.H."/>
            <person name="Birren B.W."/>
            <person name="Borodovsky M."/>
            <person name="Burns C."/>
            <person name="Canbaeck B."/>
            <person name="Casselton L.A."/>
            <person name="Cheng C.K."/>
            <person name="Deng J."/>
            <person name="Dietrich F.S."/>
            <person name="Fargo D.C."/>
            <person name="Farman M.L."/>
            <person name="Gathman A.C."/>
            <person name="Goldberg J."/>
            <person name="Guigo R."/>
            <person name="Hoegger P.J."/>
            <person name="Hooker J.B."/>
            <person name="Huggins A."/>
            <person name="James T.Y."/>
            <person name="Kamada T."/>
            <person name="Kilaru S."/>
            <person name="Kodira C."/>
            <person name="Kuees U."/>
            <person name="Kupfer D."/>
            <person name="Kwan H.S."/>
            <person name="Lomsadze A."/>
            <person name="Li W."/>
            <person name="Lilly W.W."/>
            <person name="Ma L.-J."/>
            <person name="Mackey A.J."/>
            <person name="Manning G."/>
            <person name="Martin F."/>
            <person name="Muraguchi H."/>
            <person name="Natvig D.O."/>
            <person name="Palmerini H."/>
            <person name="Ramesh M.A."/>
            <person name="Rehmeyer C.J."/>
            <person name="Roe B.A."/>
            <person name="Shenoy N."/>
            <person name="Stanke M."/>
            <person name="Ter-Hovhannisyan V."/>
            <person name="Tunlid A."/>
            <person name="Velagapudi R."/>
            <person name="Vision T.J."/>
            <person name="Zeng Q."/>
            <person name="Zolan M.E."/>
            <person name="Pukkila P.J."/>
        </authorList>
    </citation>
    <scope>NUCLEOTIDE SEQUENCE [LARGE SCALE GENOMIC DNA]</scope>
    <source>
        <strain>Okayama-7 / 130 / ATCC MYA-4618 / FGSC 9003</strain>
    </source>
</reference>
<keyword id="KW-0028">Amino-acid biosynthesis</keyword>
<keyword id="KW-0963">Cytoplasm</keyword>
<keyword id="KW-0223">Dioxygenase</keyword>
<keyword id="KW-0408">Iron</keyword>
<keyword id="KW-0479">Metal-binding</keyword>
<keyword id="KW-0486">Methionine biosynthesis</keyword>
<keyword id="KW-0533">Nickel</keyword>
<keyword id="KW-0539">Nucleus</keyword>
<keyword id="KW-0560">Oxidoreductase</keyword>
<keyword id="KW-1185">Reference proteome</keyword>
<name>MTND1_COPC7</name>
<accession>A8N4R7</accession>